<name>SYFA_GEOSM</name>
<evidence type="ECO:0000255" key="1">
    <source>
        <dbReference type="HAMAP-Rule" id="MF_00281"/>
    </source>
</evidence>
<reference key="1">
    <citation type="submission" date="2009-07" db="EMBL/GenBank/DDBJ databases">
        <title>Complete sequence of Geobacter sp. M21.</title>
        <authorList>
            <consortium name="US DOE Joint Genome Institute"/>
            <person name="Lucas S."/>
            <person name="Copeland A."/>
            <person name="Lapidus A."/>
            <person name="Glavina del Rio T."/>
            <person name="Dalin E."/>
            <person name="Tice H."/>
            <person name="Bruce D."/>
            <person name="Goodwin L."/>
            <person name="Pitluck S."/>
            <person name="Saunders E."/>
            <person name="Brettin T."/>
            <person name="Detter J.C."/>
            <person name="Han C."/>
            <person name="Larimer F."/>
            <person name="Land M."/>
            <person name="Hauser L."/>
            <person name="Kyrpides N."/>
            <person name="Ovchinnikova G."/>
            <person name="Lovley D."/>
        </authorList>
    </citation>
    <scope>NUCLEOTIDE SEQUENCE [LARGE SCALE GENOMIC DNA]</scope>
    <source>
        <strain>M21</strain>
    </source>
</reference>
<organism>
    <name type="scientific">Geobacter sp. (strain M21)</name>
    <dbReference type="NCBI Taxonomy" id="443144"/>
    <lineage>
        <taxon>Bacteria</taxon>
        <taxon>Pseudomonadati</taxon>
        <taxon>Thermodesulfobacteriota</taxon>
        <taxon>Desulfuromonadia</taxon>
        <taxon>Geobacterales</taxon>
        <taxon>Geobacteraceae</taxon>
        <taxon>Geobacter</taxon>
    </lineage>
</organism>
<accession>C6DYJ1</accession>
<protein>
    <recommendedName>
        <fullName evidence="1">Phenylalanine--tRNA ligase alpha subunit</fullName>
        <ecNumber evidence="1">6.1.1.20</ecNumber>
    </recommendedName>
    <alternativeName>
        <fullName evidence="1">Phenylalanyl-tRNA synthetase alpha subunit</fullName>
        <shortName evidence="1">PheRS</shortName>
    </alternativeName>
</protein>
<feature type="chain" id="PRO_1000204828" description="Phenylalanine--tRNA ligase alpha subunit">
    <location>
        <begin position="1"/>
        <end position="338"/>
    </location>
</feature>
<feature type="binding site" evidence="1">
    <location>
        <position position="253"/>
    </location>
    <ligand>
        <name>Mg(2+)</name>
        <dbReference type="ChEBI" id="CHEBI:18420"/>
        <note>shared with beta subunit</note>
    </ligand>
</feature>
<sequence length="338" mass="37518">MKDKLEALLDQALSELAQASTEEGVQELRVKYLGKKGELTSVMKGLGALTPEERPIIGQVVNTVKGKLEEGFELRGGEIREAVKSARLSAERIDVTLPGRRRPLGSKHPITLVTEEIASIFGALGFAVAEGPEIELDFYNFEALNLPKDHPARDMQDTFYFGESVLLRTHTSPVQIRTMLKQPPPVRIIAPGTVYRCDSDATHSPMFHQVEGLMVDKGITFGDLKGILTLFISQLFGSDIGVRLRPSFFPFTEPSAEVDIACVICRGKGCRVCKETGWLEILGAGMVDPEVYRHVGYDSELYTGFAFGMGIERIAMLKYGIADMRLLFENDLRFLKQF</sequence>
<keyword id="KW-0030">Aminoacyl-tRNA synthetase</keyword>
<keyword id="KW-0067">ATP-binding</keyword>
<keyword id="KW-0963">Cytoplasm</keyword>
<keyword id="KW-0436">Ligase</keyword>
<keyword id="KW-0460">Magnesium</keyword>
<keyword id="KW-0479">Metal-binding</keyword>
<keyword id="KW-0547">Nucleotide-binding</keyword>
<keyword id="KW-0648">Protein biosynthesis</keyword>
<gene>
    <name evidence="1" type="primary">pheS</name>
    <name type="ordered locus">GM21_2226</name>
</gene>
<comment type="catalytic activity">
    <reaction evidence="1">
        <text>tRNA(Phe) + L-phenylalanine + ATP = L-phenylalanyl-tRNA(Phe) + AMP + diphosphate + H(+)</text>
        <dbReference type="Rhea" id="RHEA:19413"/>
        <dbReference type="Rhea" id="RHEA-COMP:9668"/>
        <dbReference type="Rhea" id="RHEA-COMP:9699"/>
        <dbReference type="ChEBI" id="CHEBI:15378"/>
        <dbReference type="ChEBI" id="CHEBI:30616"/>
        <dbReference type="ChEBI" id="CHEBI:33019"/>
        <dbReference type="ChEBI" id="CHEBI:58095"/>
        <dbReference type="ChEBI" id="CHEBI:78442"/>
        <dbReference type="ChEBI" id="CHEBI:78531"/>
        <dbReference type="ChEBI" id="CHEBI:456215"/>
        <dbReference type="EC" id="6.1.1.20"/>
    </reaction>
</comment>
<comment type="cofactor">
    <cofactor evidence="1">
        <name>Mg(2+)</name>
        <dbReference type="ChEBI" id="CHEBI:18420"/>
    </cofactor>
    <text evidence="1">Binds 2 magnesium ions per tetramer.</text>
</comment>
<comment type="subunit">
    <text evidence="1">Tetramer of two alpha and two beta subunits.</text>
</comment>
<comment type="subcellular location">
    <subcellularLocation>
        <location evidence="1">Cytoplasm</location>
    </subcellularLocation>
</comment>
<comment type="similarity">
    <text evidence="1">Belongs to the class-II aminoacyl-tRNA synthetase family. Phe-tRNA synthetase alpha subunit type 1 subfamily.</text>
</comment>
<proteinExistence type="inferred from homology"/>
<dbReference type="EC" id="6.1.1.20" evidence="1"/>
<dbReference type="EMBL" id="CP001661">
    <property type="protein sequence ID" value="ACT18275.1"/>
    <property type="molecule type" value="Genomic_DNA"/>
</dbReference>
<dbReference type="SMR" id="C6DYJ1"/>
<dbReference type="STRING" id="443144.GM21_2226"/>
<dbReference type="KEGG" id="gem:GM21_2226"/>
<dbReference type="eggNOG" id="COG0016">
    <property type="taxonomic scope" value="Bacteria"/>
</dbReference>
<dbReference type="HOGENOM" id="CLU_025086_0_1_7"/>
<dbReference type="OrthoDB" id="9800719at2"/>
<dbReference type="GO" id="GO:0005737">
    <property type="term" value="C:cytoplasm"/>
    <property type="evidence" value="ECO:0007669"/>
    <property type="project" value="UniProtKB-SubCell"/>
</dbReference>
<dbReference type="GO" id="GO:0005524">
    <property type="term" value="F:ATP binding"/>
    <property type="evidence" value="ECO:0007669"/>
    <property type="project" value="UniProtKB-UniRule"/>
</dbReference>
<dbReference type="GO" id="GO:0000287">
    <property type="term" value="F:magnesium ion binding"/>
    <property type="evidence" value="ECO:0007669"/>
    <property type="project" value="UniProtKB-UniRule"/>
</dbReference>
<dbReference type="GO" id="GO:0004826">
    <property type="term" value="F:phenylalanine-tRNA ligase activity"/>
    <property type="evidence" value="ECO:0007669"/>
    <property type="project" value="UniProtKB-UniRule"/>
</dbReference>
<dbReference type="GO" id="GO:0000049">
    <property type="term" value="F:tRNA binding"/>
    <property type="evidence" value="ECO:0007669"/>
    <property type="project" value="InterPro"/>
</dbReference>
<dbReference type="GO" id="GO:0006432">
    <property type="term" value="P:phenylalanyl-tRNA aminoacylation"/>
    <property type="evidence" value="ECO:0007669"/>
    <property type="project" value="UniProtKB-UniRule"/>
</dbReference>
<dbReference type="CDD" id="cd00496">
    <property type="entry name" value="PheRS_alpha_core"/>
    <property type="match status" value="1"/>
</dbReference>
<dbReference type="FunFam" id="3.30.930.10:FF:000003">
    <property type="entry name" value="Phenylalanine--tRNA ligase alpha subunit"/>
    <property type="match status" value="1"/>
</dbReference>
<dbReference type="Gene3D" id="3.30.930.10">
    <property type="entry name" value="Bira Bifunctional Protein, Domain 2"/>
    <property type="match status" value="1"/>
</dbReference>
<dbReference type="HAMAP" id="MF_00281">
    <property type="entry name" value="Phe_tRNA_synth_alpha1"/>
    <property type="match status" value="1"/>
</dbReference>
<dbReference type="InterPro" id="IPR006195">
    <property type="entry name" value="aa-tRNA-synth_II"/>
</dbReference>
<dbReference type="InterPro" id="IPR045864">
    <property type="entry name" value="aa-tRNA-synth_II/BPL/LPL"/>
</dbReference>
<dbReference type="InterPro" id="IPR004529">
    <property type="entry name" value="Phe-tRNA-synth_IIc_asu"/>
</dbReference>
<dbReference type="InterPro" id="IPR004188">
    <property type="entry name" value="Phe-tRNA_ligase_II_N"/>
</dbReference>
<dbReference type="InterPro" id="IPR022911">
    <property type="entry name" value="Phe_tRNA_ligase_alpha1_bac"/>
</dbReference>
<dbReference type="InterPro" id="IPR002319">
    <property type="entry name" value="Phenylalanyl-tRNA_Synthase"/>
</dbReference>
<dbReference type="InterPro" id="IPR010978">
    <property type="entry name" value="tRNA-bd_arm"/>
</dbReference>
<dbReference type="NCBIfam" id="TIGR00468">
    <property type="entry name" value="pheS"/>
    <property type="match status" value="1"/>
</dbReference>
<dbReference type="PANTHER" id="PTHR11538:SF41">
    <property type="entry name" value="PHENYLALANINE--TRNA LIGASE, MITOCHONDRIAL"/>
    <property type="match status" value="1"/>
</dbReference>
<dbReference type="PANTHER" id="PTHR11538">
    <property type="entry name" value="PHENYLALANYL-TRNA SYNTHETASE"/>
    <property type="match status" value="1"/>
</dbReference>
<dbReference type="Pfam" id="PF02912">
    <property type="entry name" value="Phe_tRNA-synt_N"/>
    <property type="match status" value="1"/>
</dbReference>
<dbReference type="Pfam" id="PF01409">
    <property type="entry name" value="tRNA-synt_2d"/>
    <property type="match status" value="1"/>
</dbReference>
<dbReference type="SUPFAM" id="SSF55681">
    <property type="entry name" value="Class II aaRS and biotin synthetases"/>
    <property type="match status" value="1"/>
</dbReference>
<dbReference type="SUPFAM" id="SSF46589">
    <property type="entry name" value="tRNA-binding arm"/>
    <property type="match status" value="1"/>
</dbReference>
<dbReference type="PROSITE" id="PS50862">
    <property type="entry name" value="AA_TRNA_LIGASE_II"/>
    <property type="match status" value="1"/>
</dbReference>